<keyword id="KW-0249">Electron transport</keyword>
<keyword id="KW-0349">Heme</keyword>
<keyword id="KW-0408">Iron</keyword>
<keyword id="KW-0472">Membrane</keyword>
<keyword id="KW-0479">Metal-binding</keyword>
<keyword id="KW-0602">Photosynthesis</keyword>
<keyword id="KW-0732">Signal</keyword>
<keyword id="KW-0793">Thylakoid</keyword>
<keyword id="KW-0812">Transmembrane</keyword>
<keyword id="KW-1133">Transmembrane helix</keyword>
<keyword id="KW-0813">Transport</keyword>
<reference key="1">
    <citation type="journal article" date="2007" name="PLoS Genet.">
        <title>Patterns and implications of gene gain and loss in the evolution of Prochlorococcus.</title>
        <authorList>
            <person name="Kettler G.C."/>
            <person name="Martiny A.C."/>
            <person name="Huang K."/>
            <person name="Zucker J."/>
            <person name="Coleman M.L."/>
            <person name="Rodrigue S."/>
            <person name="Chen F."/>
            <person name="Lapidus A."/>
            <person name="Ferriera S."/>
            <person name="Johnson J."/>
            <person name="Steglich C."/>
            <person name="Church G.M."/>
            <person name="Richardson P."/>
            <person name="Chisholm S.W."/>
        </authorList>
    </citation>
    <scope>NUCLEOTIDE SEQUENCE [LARGE SCALE GENOMIC DNA]</scope>
    <source>
        <strain>MIT 9303</strain>
    </source>
</reference>
<comment type="function">
    <text evidence="1">Component of the cytochrome b6-f complex, which mediates electron transfer between photosystem II (PSII) and photosystem I (PSI), cyclic electron flow around PSI, and state transitions.</text>
</comment>
<comment type="cofactor">
    <cofactor evidence="1">
        <name>heme</name>
        <dbReference type="ChEBI" id="CHEBI:30413"/>
    </cofactor>
    <text evidence="1">Binds 1 heme group covalently.</text>
</comment>
<comment type="subunit">
    <text evidence="1">The 4 large subunits of the cytochrome b6-f complex are cytochrome b6, subunit IV (17 kDa polypeptide, PetD), cytochrome f and the Rieske protein, while the 4 small subunits are PetG, PetL, PetM and PetN. The complex functions as a dimer.</text>
</comment>
<comment type="subcellular location">
    <subcellularLocation>
        <location evidence="1">Cellular thylakoid membrane</location>
        <topology evidence="1">Single-pass membrane protein</topology>
    </subcellularLocation>
</comment>
<comment type="similarity">
    <text evidence="1">Belongs to the cytochrome f family.</text>
</comment>
<gene>
    <name evidence="1" type="primary">petA</name>
    <name type="ordered locus">P9303_06641</name>
</gene>
<protein>
    <recommendedName>
        <fullName evidence="1">Cytochrome f</fullName>
    </recommendedName>
</protein>
<sequence>MRRLIPILLGSLVLSLSILVAPAASWAYPFWAQQNYDNPREATGKIVCANCHLAQKTTQAEVPQSVLPDSVFKAVVKIPYKKDTTEISSDGSDVPLQVGAVVMLPDGFKLAPQDRWSEEIKEETKGVFFTQYSEEKENILLVGPLPGDNNKEIVFPILSPDPATDSSIQFGKYSIHVGGNRGRGQILPTGEKTNNNAFTATEAGTITSIKAGKNGESDIKLKTDSGKVISETIPAGPTLLVKVDDKVEAGAPLTSDPNSGGFGQLDTEVVLQNPVRIYGLLAFFVAVSLAQILLVLKKKQVEKVQAAEGI</sequence>
<evidence type="ECO:0000255" key="1">
    <source>
        <dbReference type="HAMAP-Rule" id="MF_00610"/>
    </source>
</evidence>
<feature type="signal peptide" evidence="1">
    <location>
        <begin position="1"/>
        <end position="23"/>
    </location>
</feature>
<feature type="chain" id="PRO_0000342032" description="Cytochrome f">
    <location>
        <begin position="24"/>
        <end position="310"/>
    </location>
</feature>
<feature type="transmembrane region" description="Helical" evidence="1">
    <location>
        <begin position="277"/>
        <end position="297"/>
    </location>
</feature>
<feature type="binding site" description="axial binding residue" evidence="1">
    <location>
        <position position="28"/>
    </location>
    <ligand>
        <name>heme</name>
        <dbReference type="ChEBI" id="CHEBI:30413"/>
    </ligand>
    <ligandPart>
        <name>Fe</name>
        <dbReference type="ChEBI" id="CHEBI:18248"/>
    </ligandPart>
</feature>
<feature type="binding site" description="covalent" evidence="1">
    <location>
        <position position="48"/>
    </location>
    <ligand>
        <name>heme</name>
        <dbReference type="ChEBI" id="CHEBI:30413"/>
    </ligand>
</feature>
<feature type="binding site" description="covalent" evidence="1">
    <location>
        <position position="51"/>
    </location>
    <ligand>
        <name>heme</name>
        <dbReference type="ChEBI" id="CHEBI:30413"/>
    </ligand>
</feature>
<feature type="binding site" description="axial binding residue" evidence="1">
    <location>
        <position position="52"/>
    </location>
    <ligand>
        <name>heme</name>
        <dbReference type="ChEBI" id="CHEBI:30413"/>
    </ligand>
    <ligandPart>
        <name>Fe</name>
        <dbReference type="ChEBI" id="CHEBI:18248"/>
    </ligandPart>
</feature>
<proteinExistence type="inferred from homology"/>
<dbReference type="EMBL" id="CP000554">
    <property type="protein sequence ID" value="ABM77415.1"/>
    <property type="molecule type" value="Genomic_DNA"/>
</dbReference>
<dbReference type="RefSeq" id="WP_011825334.1">
    <property type="nucleotide sequence ID" value="NC_008820.1"/>
</dbReference>
<dbReference type="SMR" id="A2C7F5"/>
<dbReference type="STRING" id="59922.P9303_06641"/>
<dbReference type="KEGG" id="pmf:P9303_06641"/>
<dbReference type="HOGENOM" id="CLU_033498_0_0_3"/>
<dbReference type="BioCyc" id="PMAR59922:G1G80-611-MONOMER"/>
<dbReference type="Proteomes" id="UP000002274">
    <property type="component" value="Chromosome"/>
</dbReference>
<dbReference type="GO" id="GO:0031676">
    <property type="term" value="C:plasma membrane-derived thylakoid membrane"/>
    <property type="evidence" value="ECO:0007669"/>
    <property type="project" value="UniProtKB-SubCell"/>
</dbReference>
<dbReference type="GO" id="GO:0009055">
    <property type="term" value="F:electron transfer activity"/>
    <property type="evidence" value="ECO:0007669"/>
    <property type="project" value="UniProtKB-UniRule"/>
</dbReference>
<dbReference type="GO" id="GO:0020037">
    <property type="term" value="F:heme binding"/>
    <property type="evidence" value="ECO:0007669"/>
    <property type="project" value="InterPro"/>
</dbReference>
<dbReference type="GO" id="GO:0005506">
    <property type="term" value="F:iron ion binding"/>
    <property type="evidence" value="ECO:0007669"/>
    <property type="project" value="InterPro"/>
</dbReference>
<dbReference type="GO" id="GO:0015979">
    <property type="term" value="P:photosynthesis"/>
    <property type="evidence" value="ECO:0007669"/>
    <property type="project" value="UniProtKB-UniRule"/>
</dbReference>
<dbReference type="FunFam" id="2.60.40.830:FF:000001">
    <property type="entry name" value="Cytochrome f"/>
    <property type="match status" value="1"/>
</dbReference>
<dbReference type="Gene3D" id="2.40.50.100">
    <property type="match status" value="1"/>
</dbReference>
<dbReference type="Gene3D" id="2.60.40.830">
    <property type="entry name" value="Cytochrome f large domain"/>
    <property type="match status" value="1"/>
</dbReference>
<dbReference type="Gene3D" id="1.20.5.700">
    <property type="entry name" value="Single helix bin"/>
    <property type="match status" value="1"/>
</dbReference>
<dbReference type="HAMAP" id="MF_00610">
    <property type="entry name" value="Cytb6_f_cytF"/>
    <property type="match status" value="1"/>
</dbReference>
<dbReference type="InterPro" id="IPR024058">
    <property type="entry name" value="Cyt-f_TM"/>
</dbReference>
<dbReference type="InterPro" id="IPR002325">
    <property type="entry name" value="Cyt_f"/>
</dbReference>
<dbReference type="InterPro" id="IPR024094">
    <property type="entry name" value="Cyt_f_lg_dom"/>
</dbReference>
<dbReference type="InterPro" id="IPR036826">
    <property type="entry name" value="Cyt_f_lg_dom_sf"/>
</dbReference>
<dbReference type="InterPro" id="IPR011054">
    <property type="entry name" value="Rudment_hybrid_motif"/>
</dbReference>
<dbReference type="NCBIfam" id="NF002736">
    <property type="entry name" value="PRK02693.1"/>
    <property type="match status" value="1"/>
</dbReference>
<dbReference type="PANTHER" id="PTHR33288">
    <property type="match status" value="1"/>
</dbReference>
<dbReference type="PANTHER" id="PTHR33288:SF10">
    <property type="entry name" value="CYTOCHROME F"/>
    <property type="match status" value="1"/>
</dbReference>
<dbReference type="Pfam" id="PF01333">
    <property type="entry name" value="Apocytochr_F_C"/>
    <property type="match status" value="1"/>
</dbReference>
<dbReference type="Pfam" id="PF16639">
    <property type="entry name" value="Apocytochr_F_N"/>
    <property type="match status" value="1"/>
</dbReference>
<dbReference type="PRINTS" id="PR00610">
    <property type="entry name" value="CYTOCHROMEF"/>
</dbReference>
<dbReference type="SUPFAM" id="SSF103431">
    <property type="entry name" value="Cytochrome f subunit of the cytochrome b6f complex, transmembrane anchor"/>
    <property type="match status" value="1"/>
</dbReference>
<dbReference type="SUPFAM" id="SSF49441">
    <property type="entry name" value="Cytochrome f, large domain"/>
    <property type="match status" value="1"/>
</dbReference>
<dbReference type="SUPFAM" id="SSF51246">
    <property type="entry name" value="Rudiment single hybrid motif"/>
    <property type="match status" value="1"/>
</dbReference>
<dbReference type="PROSITE" id="PS51010">
    <property type="entry name" value="CYTF"/>
    <property type="match status" value="1"/>
</dbReference>
<name>CYF_PROM3</name>
<organism>
    <name type="scientific">Prochlorococcus marinus (strain MIT 9303)</name>
    <dbReference type="NCBI Taxonomy" id="59922"/>
    <lineage>
        <taxon>Bacteria</taxon>
        <taxon>Bacillati</taxon>
        <taxon>Cyanobacteriota</taxon>
        <taxon>Cyanophyceae</taxon>
        <taxon>Synechococcales</taxon>
        <taxon>Prochlorococcaceae</taxon>
        <taxon>Prochlorococcus</taxon>
    </lineage>
</organism>
<accession>A2C7F5</accession>